<keyword id="KW-0687">Ribonucleoprotein</keyword>
<keyword id="KW-0689">Ribosomal protein</keyword>
<keyword id="KW-0694">RNA-binding</keyword>
<keyword id="KW-0699">rRNA-binding</keyword>
<keyword id="KW-0820">tRNA-binding</keyword>
<evidence type="ECO:0000255" key="1">
    <source>
        <dbReference type="HAMAP-Rule" id="MF_00480"/>
    </source>
</evidence>
<evidence type="ECO:0000305" key="2"/>
<organism>
    <name type="scientific">Clostridium botulinum (strain ATCC 19397 / Type A)</name>
    <dbReference type="NCBI Taxonomy" id="441770"/>
    <lineage>
        <taxon>Bacteria</taxon>
        <taxon>Bacillati</taxon>
        <taxon>Bacillota</taxon>
        <taxon>Clostridia</taxon>
        <taxon>Eubacteriales</taxon>
        <taxon>Clostridiaceae</taxon>
        <taxon>Clostridium</taxon>
    </lineage>
</organism>
<name>RS7_CLOB1</name>
<comment type="function">
    <text evidence="1">One of the primary rRNA binding proteins, it binds directly to 16S rRNA where it nucleates assembly of the head domain of the 30S subunit. Is located at the subunit interface close to the decoding center, probably blocks exit of the E-site tRNA.</text>
</comment>
<comment type="subunit">
    <text evidence="1">Part of the 30S ribosomal subunit. Contacts proteins S9 and S11.</text>
</comment>
<comment type="similarity">
    <text evidence="1">Belongs to the universal ribosomal protein uS7 family.</text>
</comment>
<reference key="1">
    <citation type="journal article" date="2007" name="PLoS ONE">
        <title>Analysis of the neurotoxin complex genes in Clostridium botulinum A1-A4 and B1 strains: BoNT/A3, /Ba4 and /B1 clusters are located within plasmids.</title>
        <authorList>
            <person name="Smith T.J."/>
            <person name="Hill K.K."/>
            <person name="Foley B.T."/>
            <person name="Detter J.C."/>
            <person name="Munk A.C."/>
            <person name="Bruce D.C."/>
            <person name="Doggett N.A."/>
            <person name="Smith L.A."/>
            <person name="Marks J.D."/>
            <person name="Xie G."/>
            <person name="Brettin T.S."/>
        </authorList>
    </citation>
    <scope>NUCLEOTIDE SEQUENCE [LARGE SCALE GENOMIC DNA]</scope>
    <source>
        <strain>ATCC 19397 / Type A</strain>
    </source>
</reference>
<sequence>MPRKGHIAKRDVLPDPLYNSKVVTKLINSIMLDGKRGVAQKICYDAFEIIAEKSGKDAMEVFETAMNNIMPLLEVKARRIGGATYQVPIEVRPERRQTLGIRWMLIAARKRGERSMRERLAGELLDASNNTGAAVKKREDTHKMAEANKAFAHYRY</sequence>
<accession>A7FZ73</accession>
<proteinExistence type="inferred from homology"/>
<feature type="chain" id="PRO_1000014175" description="Small ribosomal subunit protein uS7">
    <location>
        <begin position="1"/>
        <end position="156"/>
    </location>
</feature>
<gene>
    <name evidence="1" type="primary">rpsG</name>
    <name type="ordered locus">CLB_3541</name>
</gene>
<protein>
    <recommendedName>
        <fullName evidence="1">Small ribosomal subunit protein uS7</fullName>
    </recommendedName>
    <alternativeName>
        <fullName evidence="2">30S ribosomal protein S7</fullName>
    </alternativeName>
</protein>
<dbReference type="EMBL" id="CP000726">
    <property type="protein sequence ID" value="ABS34868.1"/>
    <property type="molecule type" value="Genomic_DNA"/>
</dbReference>
<dbReference type="RefSeq" id="WP_003357613.1">
    <property type="nucleotide sequence ID" value="NC_009697.1"/>
</dbReference>
<dbReference type="SMR" id="A7FZ73"/>
<dbReference type="GeneID" id="92940254"/>
<dbReference type="KEGG" id="cba:CLB_3541"/>
<dbReference type="HOGENOM" id="CLU_072226_1_1_9"/>
<dbReference type="GO" id="GO:0015935">
    <property type="term" value="C:small ribosomal subunit"/>
    <property type="evidence" value="ECO:0007669"/>
    <property type="project" value="InterPro"/>
</dbReference>
<dbReference type="GO" id="GO:0019843">
    <property type="term" value="F:rRNA binding"/>
    <property type="evidence" value="ECO:0007669"/>
    <property type="project" value="UniProtKB-UniRule"/>
</dbReference>
<dbReference type="GO" id="GO:0003735">
    <property type="term" value="F:structural constituent of ribosome"/>
    <property type="evidence" value="ECO:0007669"/>
    <property type="project" value="InterPro"/>
</dbReference>
<dbReference type="GO" id="GO:0000049">
    <property type="term" value="F:tRNA binding"/>
    <property type="evidence" value="ECO:0007669"/>
    <property type="project" value="UniProtKB-UniRule"/>
</dbReference>
<dbReference type="GO" id="GO:0006412">
    <property type="term" value="P:translation"/>
    <property type="evidence" value="ECO:0007669"/>
    <property type="project" value="UniProtKB-UniRule"/>
</dbReference>
<dbReference type="CDD" id="cd14869">
    <property type="entry name" value="uS7_Bacteria"/>
    <property type="match status" value="1"/>
</dbReference>
<dbReference type="FunFam" id="1.10.455.10:FF:000001">
    <property type="entry name" value="30S ribosomal protein S7"/>
    <property type="match status" value="1"/>
</dbReference>
<dbReference type="Gene3D" id="1.10.455.10">
    <property type="entry name" value="Ribosomal protein S7 domain"/>
    <property type="match status" value="1"/>
</dbReference>
<dbReference type="HAMAP" id="MF_00480_B">
    <property type="entry name" value="Ribosomal_uS7_B"/>
    <property type="match status" value="1"/>
</dbReference>
<dbReference type="InterPro" id="IPR000235">
    <property type="entry name" value="Ribosomal_uS7"/>
</dbReference>
<dbReference type="InterPro" id="IPR005717">
    <property type="entry name" value="Ribosomal_uS7_bac/org-type"/>
</dbReference>
<dbReference type="InterPro" id="IPR020606">
    <property type="entry name" value="Ribosomal_uS7_CS"/>
</dbReference>
<dbReference type="InterPro" id="IPR023798">
    <property type="entry name" value="Ribosomal_uS7_dom"/>
</dbReference>
<dbReference type="InterPro" id="IPR036823">
    <property type="entry name" value="Ribosomal_uS7_dom_sf"/>
</dbReference>
<dbReference type="NCBIfam" id="TIGR01029">
    <property type="entry name" value="rpsG_bact"/>
    <property type="match status" value="1"/>
</dbReference>
<dbReference type="PANTHER" id="PTHR11205">
    <property type="entry name" value="RIBOSOMAL PROTEIN S7"/>
    <property type="match status" value="1"/>
</dbReference>
<dbReference type="Pfam" id="PF00177">
    <property type="entry name" value="Ribosomal_S7"/>
    <property type="match status" value="1"/>
</dbReference>
<dbReference type="PIRSF" id="PIRSF002122">
    <property type="entry name" value="RPS7p_RPS7a_RPS5e_RPS7o"/>
    <property type="match status" value="1"/>
</dbReference>
<dbReference type="SUPFAM" id="SSF47973">
    <property type="entry name" value="Ribosomal protein S7"/>
    <property type="match status" value="1"/>
</dbReference>
<dbReference type="PROSITE" id="PS00052">
    <property type="entry name" value="RIBOSOMAL_S7"/>
    <property type="match status" value="1"/>
</dbReference>